<feature type="chain" id="PRO_0000213911" description="Protein cps3">
    <location>
        <begin position="1"/>
        <end position="583"/>
    </location>
</feature>
<feature type="zinc finger region" description="C3H1-type 1" evidence="1">
    <location>
        <begin position="35"/>
        <end position="62"/>
    </location>
</feature>
<feature type="zinc finger region" description="C3H1-type 2" evidence="1">
    <location>
        <begin position="64"/>
        <end position="91"/>
    </location>
</feature>
<feature type="region of interest" description="Disordered" evidence="2">
    <location>
        <begin position="318"/>
        <end position="346"/>
    </location>
</feature>
<feature type="region of interest" description="Disordered" evidence="2">
    <location>
        <begin position="471"/>
        <end position="490"/>
    </location>
</feature>
<feature type="region of interest" description="Disordered" evidence="2">
    <location>
        <begin position="504"/>
        <end position="532"/>
    </location>
</feature>
<feature type="compositionally biased region" description="Polar residues" evidence="2">
    <location>
        <begin position="323"/>
        <end position="334"/>
    </location>
</feature>
<feature type="compositionally biased region" description="Polar residues" evidence="2">
    <location>
        <begin position="475"/>
        <end position="490"/>
    </location>
</feature>
<feature type="compositionally biased region" description="Polar residues" evidence="2">
    <location>
        <begin position="513"/>
        <end position="532"/>
    </location>
</feature>
<comment type="function">
    <text evidence="3">Responsible for supersensitivity to the spindle poison, isopropyl N-3-chlorophenyl carbamate. Has a role in meiosis.</text>
</comment>
<comment type="subcellular location">
    <subcellularLocation>
        <location evidence="4">Cytoplasm</location>
    </subcellularLocation>
</comment>
<keyword id="KW-0963">Cytoplasm</keyword>
<keyword id="KW-0469">Meiosis</keyword>
<keyword id="KW-0479">Metal-binding</keyword>
<keyword id="KW-1185">Reference proteome</keyword>
<keyword id="KW-0677">Repeat</keyword>
<keyword id="KW-0862">Zinc</keyword>
<keyword id="KW-0863">Zinc-finger</keyword>
<organism>
    <name type="scientific">Schizosaccharomyces pombe (strain 972 / ATCC 24843)</name>
    <name type="common">Fission yeast</name>
    <dbReference type="NCBI Taxonomy" id="284812"/>
    <lineage>
        <taxon>Eukaryota</taxon>
        <taxon>Fungi</taxon>
        <taxon>Dikarya</taxon>
        <taxon>Ascomycota</taxon>
        <taxon>Taphrinomycotina</taxon>
        <taxon>Schizosaccharomycetes</taxon>
        <taxon>Schizosaccharomycetales</taxon>
        <taxon>Schizosaccharomycetaceae</taxon>
        <taxon>Schizosaccharomyces</taxon>
    </lineage>
</organism>
<sequence length="583" mass="62808">MTKKNAFKNSEDMKKYHLSEFNSEATSLTRPSPKSLQHVPCKFFRQGTCTSGKNCIFSHDLELATEKTICKYFQKGNCKFGSKCALEHVLPDGRKVKTRAFAPSTTAMGSSSQNISAAPMANIISNNDKILPMTTMASATASEEKNRIKDEALVIKKEESNVAIPSEVTVAANAFSASTEDVYSIVGDSLSKKASVKDFSDVTGIETIPAYVEATNGSSTVRSPHAKRSLSSISVKSSTSPFSGSKFLSSSSYPHTPEAHLNSNHISPASFGSGIRTRNIFNPESMSLGLKPPILNRSYSASMAPGFSMNTFTATGNLGRPTKSPSVPTSVGSNKSRKFPGINGSTLTATPSSLENLYPLSSRRSVPNLISSLGTSPSTFSSQFLKSTDRTHSFTSKLQSFNPVGTSLLASSLGTSQEDSVNYDIPDEFANEEDFIPNSLQELLTPEELERKMSHGDEAVSSSSASRFMSKVSSNLNSGNPTPYNSYNGTPTSSRFVAFFDRHRQESEKATPPSLNKVSQEPLTATTPKNLGNLTAISETLENGQTLKSNMASSIEKSKTSTEVVASYDTTLDEETQFQMDEA</sequence>
<accession>P41000</accession>
<accession>O14117</accession>
<dbReference type="EMBL" id="CU329670">
    <property type="protein sequence ID" value="CAB16391.1"/>
    <property type="molecule type" value="Genomic_DNA"/>
</dbReference>
<dbReference type="EMBL" id="AB017490">
    <property type="protein sequence ID" value="BAA33049.1"/>
    <property type="molecule type" value="Genomic_DNA"/>
</dbReference>
<dbReference type="PIR" id="T11624">
    <property type="entry name" value="T11624"/>
</dbReference>
<dbReference type="RefSeq" id="NP_594201.1">
    <property type="nucleotide sequence ID" value="NM_001019625.2"/>
</dbReference>
<dbReference type="BioGRID" id="279488">
    <property type="interactions" value="1"/>
</dbReference>
<dbReference type="STRING" id="284812.P41000"/>
<dbReference type="iPTMnet" id="P41000"/>
<dbReference type="PaxDb" id="4896-SPAC3A11.02.1"/>
<dbReference type="EnsemblFungi" id="SPAC3A11.02.1">
    <property type="protein sequence ID" value="SPAC3A11.02.1:pep"/>
    <property type="gene ID" value="SPAC3A11.02"/>
</dbReference>
<dbReference type="GeneID" id="2543054"/>
<dbReference type="KEGG" id="spo:2543054"/>
<dbReference type="PomBase" id="SPAC3A11.02">
    <property type="gene designation" value="cps3"/>
</dbReference>
<dbReference type="VEuPathDB" id="FungiDB:SPAC3A11.02"/>
<dbReference type="eggNOG" id="KOG1039">
    <property type="taxonomic scope" value="Eukaryota"/>
</dbReference>
<dbReference type="HOGENOM" id="CLU_468647_0_0_1"/>
<dbReference type="InParanoid" id="P41000"/>
<dbReference type="OMA" id="EDMKKYH"/>
<dbReference type="Reactome" id="R-SPO-198323">
    <property type="pathway name" value="AKT phosphorylates targets in the cytosol"/>
</dbReference>
<dbReference type="Reactome" id="R-SPO-8948751">
    <property type="pathway name" value="Regulation of PTEN stability and activity"/>
</dbReference>
<dbReference type="Reactome" id="R-SPO-983168">
    <property type="pathway name" value="Antigen processing: Ubiquitination &amp; Proteasome degradation"/>
</dbReference>
<dbReference type="PRO" id="PR:P41000"/>
<dbReference type="Proteomes" id="UP000002485">
    <property type="component" value="Chromosome I"/>
</dbReference>
<dbReference type="GO" id="GO:0005829">
    <property type="term" value="C:cytosol"/>
    <property type="evidence" value="ECO:0007005"/>
    <property type="project" value="PomBase"/>
</dbReference>
<dbReference type="GO" id="GO:0005634">
    <property type="term" value="C:nucleus"/>
    <property type="evidence" value="ECO:0007669"/>
    <property type="project" value="UniProtKB-ARBA"/>
</dbReference>
<dbReference type="GO" id="GO:0061630">
    <property type="term" value="F:ubiquitin protein ligase activity"/>
    <property type="evidence" value="ECO:0000318"/>
    <property type="project" value="GO_Central"/>
</dbReference>
<dbReference type="GO" id="GO:0008270">
    <property type="term" value="F:zinc ion binding"/>
    <property type="evidence" value="ECO:0007669"/>
    <property type="project" value="UniProtKB-KW"/>
</dbReference>
<dbReference type="GO" id="GO:0051321">
    <property type="term" value="P:meiotic cell cycle"/>
    <property type="evidence" value="ECO:0007669"/>
    <property type="project" value="UniProtKB-KW"/>
</dbReference>
<dbReference type="GO" id="GO:0016071">
    <property type="term" value="P:mRNA metabolic process"/>
    <property type="evidence" value="ECO:0007669"/>
    <property type="project" value="UniProtKB-ARBA"/>
</dbReference>
<dbReference type="GO" id="GO:0000209">
    <property type="term" value="P:protein polyubiquitination"/>
    <property type="evidence" value="ECO:0007669"/>
    <property type="project" value="InterPro"/>
</dbReference>
<dbReference type="GO" id="GO:0016567">
    <property type="term" value="P:protein ubiquitination"/>
    <property type="evidence" value="ECO:0000318"/>
    <property type="project" value="GO_Central"/>
</dbReference>
<dbReference type="GO" id="GO:1990116">
    <property type="term" value="P:ribosome-associated ubiquitin-dependent protein catabolic process"/>
    <property type="evidence" value="ECO:0000304"/>
    <property type="project" value="PomBase"/>
</dbReference>
<dbReference type="Gene3D" id="2.30.30.1190">
    <property type="match status" value="1"/>
</dbReference>
<dbReference type="Gene3D" id="4.10.1000.10">
    <property type="entry name" value="Zinc finger, CCCH-type"/>
    <property type="match status" value="1"/>
</dbReference>
<dbReference type="InterPro" id="IPR045072">
    <property type="entry name" value="MKRN-like"/>
</dbReference>
<dbReference type="InterPro" id="IPR041367">
    <property type="entry name" value="Znf-CCCH_4"/>
</dbReference>
<dbReference type="InterPro" id="IPR000571">
    <property type="entry name" value="Znf_CCCH"/>
</dbReference>
<dbReference type="InterPro" id="IPR036855">
    <property type="entry name" value="Znf_CCCH_sf"/>
</dbReference>
<dbReference type="PANTHER" id="PTHR11224:SF10">
    <property type="entry name" value="IP09428P-RELATED"/>
    <property type="match status" value="1"/>
</dbReference>
<dbReference type="PANTHER" id="PTHR11224">
    <property type="entry name" value="MAKORIN-RELATED"/>
    <property type="match status" value="1"/>
</dbReference>
<dbReference type="Pfam" id="PF18044">
    <property type="entry name" value="zf-CCCH_4"/>
    <property type="match status" value="2"/>
</dbReference>
<dbReference type="SMART" id="SM00356">
    <property type="entry name" value="ZnF_C3H1"/>
    <property type="match status" value="2"/>
</dbReference>
<dbReference type="SUPFAM" id="SSF90229">
    <property type="entry name" value="CCCH zinc finger"/>
    <property type="match status" value="2"/>
</dbReference>
<dbReference type="PROSITE" id="PS50103">
    <property type="entry name" value="ZF_C3H1"/>
    <property type="match status" value="2"/>
</dbReference>
<protein>
    <recommendedName>
        <fullName>Protein cps3</fullName>
    </recommendedName>
    <alternativeName>
        <fullName>Meiotically up-regulated gene 188 protein</fullName>
    </alternativeName>
</protein>
<reference key="1">
    <citation type="journal article" date="2002" name="Nature">
        <title>The genome sequence of Schizosaccharomyces pombe.</title>
        <authorList>
            <person name="Wood V."/>
            <person name="Gwilliam R."/>
            <person name="Rajandream M.A."/>
            <person name="Lyne M.H."/>
            <person name="Lyne R."/>
            <person name="Stewart A."/>
            <person name="Sgouros J.G."/>
            <person name="Peat N."/>
            <person name="Hayles J."/>
            <person name="Baker S.G."/>
            <person name="Basham D."/>
            <person name="Bowman S."/>
            <person name="Brooks K."/>
            <person name="Brown D."/>
            <person name="Brown S."/>
            <person name="Chillingworth T."/>
            <person name="Churcher C.M."/>
            <person name="Collins M."/>
            <person name="Connor R."/>
            <person name="Cronin A."/>
            <person name="Davis P."/>
            <person name="Feltwell T."/>
            <person name="Fraser A."/>
            <person name="Gentles S."/>
            <person name="Goble A."/>
            <person name="Hamlin N."/>
            <person name="Harris D.E."/>
            <person name="Hidalgo J."/>
            <person name="Hodgson G."/>
            <person name="Holroyd S."/>
            <person name="Hornsby T."/>
            <person name="Howarth S."/>
            <person name="Huckle E.J."/>
            <person name="Hunt S."/>
            <person name="Jagels K."/>
            <person name="James K.D."/>
            <person name="Jones L."/>
            <person name="Jones M."/>
            <person name="Leather S."/>
            <person name="McDonald S."/>
            <person name="McLean J."/>
            <person name="Mooney P."/>
            <person name="Moule S."/>
            <person name="Mungall K.L."/>
            <person name="Murphy L.D."/>
            <person name="Niblett D."/>
            <person name="Odell C."/>
            <person name="Oliver K."/>
            <person name="O'Neil S."/>
            <person name="Pearson D."/>
            <person name="Quail M.A."/>
            <person name="Rabbinowitsch E."/>
            <person name="Rutherford K.M."/>
            <person name="Rutter S."/>
            <person name="Saunders D."/>
            <person name="Seeger K."/>
            <person name="Sharp S."/>
            <person name="Skelton J."/>
            <person name="Simmonds M.N."/>
            <person name="Squares R."/>
            <person name="Squares S."/>
            <person name="Stevens K."/>
            <person name="Taylor K."/>
            <person name="Taylor R.G."/>
            <person name="Tivey A."/>
            <person name="Walsh S.V."/>
            <person name="Warren T."/>
            <person name="Whitehead S."/>
            <person name="Woodward J.R."/>
            <person name="Volckaert G."/>
            <person name="Aert R."/>
            <person name="Robben J."/>
            <person name="Grymonprez B."/>
            <person name="Weltjens I."/>
            <person name="Vanstreels E."/>
            <person name="Rieger M."/>
            <person name="Schaefer M."/>
            <person name="Mueller-Auer S."/>
            <person name="Gabel C."/>
            <person name="Fuchs M."/>
            <person name="Duesterhoeft A."/>
            <person name="Fritzc C."/>
            <person name="Holzer E."/>
            <person name="Moestl D."/>
            <person name="Hilbert H."/>
            <person name="Borzym K."/>
            <person name="Langer I."/>
            <person name="Beck A."/>
            <person name="Lehrach H."/>
            <person name="Reinhardt R."/>
            <person name="Pohl T.M."/>
            <person name="Eger P."/>
            <person name="Zimmermann W."/>
            <person name="Wedler H."/>
            <person name="Wambutt R."/>
            <person name="Purnelle B."/>
            <person name="Goffeau A."/>
            <person name="Cadieu E."/>
            <person name="Dreano S."/>
            <person name="Gloux S."/>
            <person name="Lelaure V."/>
            <person name="Mottier S."/>
            <person name="Galibert F."/>
            <person name="Aves S.J."/>
            <person name="Xiang Z."/>
            <person name="Hunt C."/>
            <person name="Moore K."/>
            <person name="Hurst S.M."/>
            <person name="Lucas M."/>
            <person name="Rochet M."/>
            <person name="Gaillardin C."/>
            <person name="Tallada V.A."/>
            <person name="Garzon A."/>
            <person name="Thode G."/>
            <person name="Daga R.R."/>
            <person name="Cruzado L."/>
            <person name="Jimenez J."/>
            <person name="Sanchez M."/>
            <person name="del Rey F."/>
            <person name="Benito J."/>
            <person name="Dominguez A."/>
            <person name="Revuelta J.L."/>
            <person name="Moreno S."/>
            <person name="Armstrong J."/>
            <person name="Forsburg S.L."/>
            <person name="Cerutti L."/>
            <person name="Lowe T."/>
            <person name="McCombie W.R."/>
            <person name="Paulsen I."/>
            <person name="Potashkin J."/>
            <person name="Shpakovski G.V."/>
            <person name="Ussery D."/>
            <person name="Barrell B.G."/>
            <person name="Nurse P."/>
        </authorList>
    </citation>
    <scope>NUCLEOTIDE SEQUENCE [LARGE SCALE GENOMIC DNA]</scope>
    <source>
        <strain>972 / ATCC 24843</strain>
    </source>
</reference>
<reference key="2">
    <citation type="journal article" date="1994" name="Jpn. J. Genet.">
        <title>Molecular cloning and characterization of a fission yeast gene responsible for supersensitivity to the spindle poison, isopropyl N-3-chlorophenyl carbamate.</title>
        <authorList>
            <person name="Ishiguro J."/>
            <person name="Uhara Y."/>
            <person name="Kawahara K."/>
        </authorList>
    </citation>
    <scope>NUCLEOTIDE SEQUENCE [GENOMIC DNA] OF 108-583</scope>
    <source>
        <strain>972 / ATCC 24843</strain>
    </source>
</reference>
<reference key="3">
    <citation type="submission" date="1998-09" db="EMBL/GenBank/DDBJ databases">
        <authorList>
            <person name="Ishiguro J."/>
        </authorList>
    </citation>
    <scope>SEQUENCE REVISION</scope>
</reference>
<reference key="4">
    <citation type="journal article" date="2005" name="Curr. Biol.">
        <title>A large-scale screen in S. pombe identifies seven novel genes required for critical meiotic events.</title>
        <authorList>
            <person name="Martin-Castellanos C."/>
            <person name="Blanco M."/>
            <person name="Rozalen A.E."/>
            <person name="Perez-Hidalgo L."/>
            <person name="Garcia A.I."/>
            <person name="Conde F."/>
            <person name="Mata J."/>
            <person name="Ellermeier C."/>
            <person name="Davis L."/>
            <person name="San-Segundo P."/>
            <person name="Smith G.R."/>
            <person name="Moreno S."/>
        </authorList>
    </citation>
    <scope>FUNCTION IN MEIOSIS</scope>
</reference>
<reference key="5">
    <citation type="journal article" date="2006" name="Nat. Biotechnol.">
        <title>ORFeome cloning and global analysis of protein localization in the fission yeast Schizosaccharomyces pombe.</title>
        <authorList>
            <person name="Matsuyama A."/>
            <person name="Arai R."/>
            <person name="Yashiroda Y."/>
            <person name="Shirai A."/>
            <person name="Kamata A."/>
            <person name="Sekido S."/>
            <person name="Kobayashi Y."/>
            <person name="Hashimoto A."/>
            <person name="Hamamoto M."/>
            <person name="Hiraoka Y."/>
            <person name="Horinouchi S."/>
            <person name="Yoshida M."/>
        </authorList>
    </citation>
    <scope>SUBCELLULAR LOCATION [LARGE SCALE ANALYSIS]</scope>
</reference>
<name>CPS3_SCHPO</name>
<gene>
    <name type="primary">cps3</name>
    <name type="synonym">mug188</name>
    <name type="synonym">scp3</name>
    <name type="ORF">SPAC3A11.02</name>
</gene>
<proteinExistence type="evidence at protein level"/>
<evidence type="ECO:0000255" key="1">
    <source>
        <dbReference type="PROSITE-ProRule" id="PRU00723"/>
    </source>
</evidence>
<evidence type="ECO:0000256" key="2">
    <source>
        <dbReference type="SAM" id="MobiDB-lite"/>
    </source>
</evidence>
<evidence type="ECO:0000269" key="3">
    <source>
    </source>
</evidence>
<evidence type="ECO:0000269" key="4">
    <source>
    </source>
</evidence>